<feature type="chain" id="PRO_0000112432" description="N-acetyl-gamma-glutamyl-phosphate reductase">
    <location>
        <begin position="1"/>
        <end position="335"/>
    </location>
</feature>
<feature type="active site" evidence="1">
    <location>
        <position position="155"/>
    </location>
</feature>
<dbReference type="EC" id="1.2.1.38" evidence="1"/>
<dbReference type="EMBL" id="AE004439">
    <property type="protein sequence ID" value="AAK03202.1"/>
    <property type="molecule type" value="Genomic_DNA"/>
</dbReference>
<dbReference type="RefSeq" id="WP_010907026.1">
    <property type="nucleotide sequence ID" value="NC_002663.1"/>
</dbReference>
<dbReference type="SMR" id="P57907"/>
<dbReference type="STRING" id="272843.PM1118"/>
<dbReference type="EnsemblBacteria" id="AAK03202">
    <property type="protein sequence ID" value="AAK03202"/>
    <property type="gene ID" value="PM1118"/>
</dbReference>
<dbReference type="KEGG" id="pmu:PM1118"/>
<dbReference type="PATRIC" id="fig|272843.6.peg.1131"/>
<dbReference type="HOGENOM" id="CLU_006384_0_1_6"/>
<dbReference type="OrthoDB" id="9801289at2"/>
<dbReference type="UniPathway" id="UPA00068">
    <property type="reaction ID" value="UER00108"/>
</dbReference>
<dbReference type="Proteomes" id="UP000000809">
    <property type="component" value="Chromosome"/>
</dbReference>
<dbReference type="GO" id="GO:0005737">
    <property type="term" value="C:cytoplasm"/>
    <property type="evidence" value="ECO:0007669"/>
    <property type="project" value="UniProtKB-SubCell"/>
</dbReference>
<dbReference type="GO" id="GO:0003942">
    <property type="term" value="F:N-acetyl-gamma-glutamyl-phosphate reductase activity"/>
    <property type="evidence" value="ECO:0007669"/>
    <property type="project" value="UniProtKB-UniRule"/>
</dbReference>
<dbReference type="GO" id="GO:0051287">
    <property type="term" value="F:NAD binding"/>
    <property type="evidence" value="ECO:0007669"/>
    <property type="project" value="InterPro"/>
</dbReference>
<dbReference type="GO" id="GO:0070401">
    <property type="term" value="F:NADP+ binding"/>
    <property type="evidence" value="ECO:0007669"/>
    <property type="project" value="InterPro"/>
</dbReference>
<dbReference type="GO" id="GO:0006526">
    <property type="term" value="P:L-arginine biosynthetic process"/>
    <property type="evidence" value="ECO:0007669"/>
    <property type="project" value="UniProtKB-UniRule"/>
</dbReference>
<dbReference type="CDD" id="cd23934">
    <property type="entry name" value="AGPR_1_C"/>
    <property type="match status" value="1"/>
</dbReference>
<dbReference type="CDD" id="cd17895">
    <property type="entry name" value="AGPR_1_N"/>
    <property type="match status" value="1"/>
</dbReference>
<dbReference type="FunFam" id="3.30.360.10:FF:000014">
    <property type="entry name" value="N-acetyl-gamma-glutamyl-phosphate reductase"/>
    <property type="match status" value="1"/>
</dbReference>
<dbReference type="FunFam" id="3.40.50.720:FF:000117">
    <property type="entry name" value="N-acetyl-gamma-glutamyl-phosphate reductase"/>
    <property type="match status" value="1"/>
</dbReference>
<dbReference type="Gene3D" id="3.30.360.10">
    <property type="entry name" value="Dihydrodipicolinate Reductase, domain 2"/>
    <property type="match status" value="1"/>
</dbReference>
<dbReference type="Gene3D" id="3.40.50.720">
    <property type="entry name" value="NAD(P)-binding Rossmann-like Domain"/>
    <property type="match status" value="1"/>
</dbReference>
<dbReference type="HAMAP" id="MF_00150">
    <property type="entry name" value="ArgC_type1"/>
    <property type="match status" value="1"/>
</dbReference>
<dbReference type="InterPro" id="IPR023013">
    <property type="entry name" value="AGPR_AS"/>
</dbReference>
<dbReference type="InterPro" id="IPR000706">
    <property type="entry name" value="AGPR_type-1"/>
</dbReference>
<dbReference type="InterPro" id="IPR036291">
    <property type="entry name" value="NAD(P)-bd_dom_sf"/>
</dbReference>
<dbReference type="InterPro" id="IPR050085">
    <property type="entry name" value="NAGSA_dehydrogenase"/>
</dbReference>
<dbReference type="InterPro" id="IPR000534">
    <property type="entry name" value="Semialdehyde_DH_NAD-bd"/>
</dbReference>
<dbReference type="NCBIfam" id="TIGR01850">
    <property type="entry name" value="argC"/>
    <property type="match status" value="1"/>
</dbReference>
<dbReference type="PANTHER" id="PTHR32338:SF10">
    <property type="entry name" value="N-ACETYL-GAMMA-GLUTAMYL-PHOSPHATE REDUCTASE, CHLOROPLASTIC-RELATED"/>
    <property type="match status" value="1"/>
</dbReference>
<dbReference type="PANTHER" id="PTHR32338">
    <property type="entry name" value="N-ACETYL-GAMMA-GLUTAMYL-PHOSPHATE REDUCTASE, CHLOROPLASTIC-RELATED-RELATED"/>
    <property type="match status" value="1"/>
</dbReference>
<dbReference type="Pfam" id="PF01118">
    <property type="entry name" value="Semialdhyde_dh"/>
    <property type="match status" value="1"/>
</dbReference>
<dbReference type="Pfam" id="PF22698">
    <property type="entry name" value="Semialdhyde_dhC_1"/>
    <property type="match status" value="1"/>
</dbReference>
<dbReference type="SMART" id="SM00859">
    <property type="entry name" value="Semialdhyde_dh"/>
    <property type="match status" value="1"/>
</dbReference>
<dbReference type="SUPFAM" id="SSF55347">
    <property type="entry name" value="Glyceraldehyde-3-phosphate dehydrogenase-like, C-terminal domain"/>
    <property type="match status" value="1"/>
</dbReference>
<dbReference type="SUPFAM" id="SSF51735">
    <property type="entry name" value="NAD(P)-binding Rossmann-fold domains"/>
    <property type="match status" value="1"/>
</dbReference>
<dbReference type="PROSITE" id="PS01224">
    <property type="entry name" value="ARGC"/>
    <property type="match status" value="1"/>
</dbReference>
<gene>
    <name evidence="1" type="primary">argC</name>
    <name type="ordered locus">PM1118</name>
</gene>
<accession>P57907</accession>
<reference key="1">
    <citation type="journal article" date="2001" name="Proc. Natl. Acad. Sci. U.S.A.">
        <title>Complete genomic sequence of Pasteurella multocida Pm70.</title>
        <authorList>
            <person name="May B.J."/>
            <person name="Zhang Q."/>
            <person name="Li L.L."/>
            <person name="Paustian M.L."/>
            <person name="Whittam T.S."/>
            <person name="Kapur V."/>
        </authorList>
    </citation>
    <scope>NUCLEOTIDE SEQUENCE [LARGE SCALE GENOMIC DNA]</scope>
    <source>
        <strain>Pm70</strain>
    </source>
</reference>
<comment type="function">
    <text evidence="1">Catalyzes the NADPH-dependent reduction of N-acetyl-5-glutamyl phosphate to yield N-acetyl-L-glutamate 5-semialdehyde.</text>
</comment>
<comment type="catalytic activity">
    <reaction evidence="1">
        <text>N-acetyl-L-glutamate 5-semialdehyde + phosphate + NADP(+) = N-acetyl-L-glutamyl 5-phosphate + NADPH + H(+)</text>
        <dbReference type="Rhea" id="RHEA:21588"/>
        <dbReference type="ChEBI" id="CHEBI:15378"/>
        <dbReference type="ChEBI" id="CHEBI:29123"/>
        <dbReference type="ChEBI" id="CHEBI:43474"/>
        <dbReference type="ChEBI" id="CHEBI:57783"/>
        <dbReference type="ChEBI" id="CHEBI:57936"/>
        <dbReference type="ChEBI" id="CHEBI:58349"/>
        <dbReference type="EC" id="1.2.1.38"/>
    </reaction>
</comment>
<comment type="pathway">
    <text evidence="1">Amino-acid biosynthesis; L-arginine biosynthesis; N(2)-acetyl-L-ornithine from L-glutamate: step 3/4.</text>
</comment>
<comment type="subcellular location">
    <subcellularLocation>
        <location evidence="1">Cytoplasm</location>
    </subcellularLocation>
</comment>
<comment type="similarity">
    <text evidence="1">Belongs to the NAGSA dehydrogenase family. Type 1 subfamily.</text>
</comment>
<keyword id="KW-0028">Amino-acid biosynthesis</keyword>
<keyword id="KW-0055">Arginine biosynthesis</keyword>
<keyword id="KW-0963">Cytoplasm</keyword>
<keyword id="KW-0521">NADP</keyword>
<keyword id="KW-0560">Oxidoreductase</keyword>
<keyword id="KW-1185">Reference proteome</keyword>
<protein>
    <recommendedName>
        <fullName evidence="1">N-acetyl-gamma-glutamyl-phosphate reductase</fullName>
        <shortName evidence="1">AGPR</shortName>
        <ecNumber evidence="1">1.2.1.38</ecNumber>
    </recommendedName>
    <alternativeName>
        <fullName evidence="1">N-acetyl-glutamate semialdehyde dehydrogenase</fullName>
        <shortName evidence="1">NAGSA dehydrogenase</shortName>
    </alternativeName>
</protein>
<organism>
    <name type="scientific">Pasteurella multocida (strain Pm70)</name>
    <dbReference type="NCBI Taxonomy" id="272843"/>
    <lineage>
        <taxon>Bacteria</taxon>
        <taxon>Pseudomonadati</taxon>
        <taxon>Pseudomonadota</taxon>
        <taxon>Gammaproteobacteria</taxon>
        <taxon>Pasteurellales</taxon>
        <taxon>Pasteurellaceae</taxon>
        <taxon>Pasteurella</taxon>
    </lineage>
</organism>
<proteinExistence type="inferred from homology"/>
<sequence>MQKAIIIGASGYTGAELARLLIKHPEFELTGLYVSRQSQDANKCISDIYPQLKHLVDLPLQPLPEQLTQLAQQADLVFLATAHEVSHDLAPIFLQNQCKVFDLSGAFRVNNAAFYRTFYGFEHQHPELLTQAVYGLAEWNAHQIKQTDLVAVAGCYPTVSQLSLKPLIAHNLLDLTQLPVINAVSGVSGAGRKATLTSSFCEVSLNAYGVFNHRHQPEIATHLGTEVIFTPHLGNFKRGILATITAKLKTGVSDEQIRVAYQHAYADKPLVRVYEQGLPSIKAVEFTPYCDIGFVTKNGHIIIIGAEDNLLKGAAAQAVQCANIRYGLTETLGLL</sequence>
<name>ARGC_PASMU</name>
<evidence type="ECO:0000255" key="1">
    <source>
        <dbReference type="HAMAP-Rule" id="MF_00150"/>
    </source>
</evidence>